<feature type="chain" id="PRO_0000117326" description="A-type ATP synthase subunit E">
    <location>
        <begin position="1"/>
        <end position="191"/>
    </location>
</feature>
<protein>
    <recommendedName>
        <fullName evidence="1">A-type ATP synthase subunit E</fullName>
    </recommendedName>
</protein>
<comment type="function">
    <text evidence="1">Component of the A-type ATP synthase that produces ATP from ADP in the presence of a proton gradient across the membrane.</text>
</comment>
<comment type="subunit">
    <text evidence="1">Has multiple subunits with at least A(3), B(3), C, D, E, F, H, I and proteolipid K(x).</text>
</comment>
<comment type="subcellular location">
    <subcellularLocation>
        <location evidence="1">Cell membrane</location>
        <topology evidence="1">Peripheral membrane protein</topology>
    </subcellularLocation>
</comment>
<comment type="PTM">
    <text>The N-terminus is blocked.</text>
</comment>
<comment type="similarity">
    <text evidence="1">Belongs to the V-ATPase E subunit family.</text>
</comment>
<comment type="caution">
    <text evidence="3">Was originally reported as originating from S.acidocaldarius.</text>
</comment>
<comment type="sequence caution" evidence="2">
    <conflict type="frameshift">
        <sequence resource="EMBL-CDS" id="AAA72940"/>
    </conflict>
</comment>
<dbReference type="EMBL" id="M57236">
    <property type="protein sequence ID" value="AAA72940.1"/>
    <property type="status" value="ALT_FRAME"/>
    <property type="molecule type" value="Genomic_DNA"/>
</dbReference>
<dbReference type="EMBL" id="BA000023">
    <property type="protein sequence ID" value="BAK54571.1"/>
    <property type="molecule type" value="Genomic_DNA"/>
</dbReference>
<dbReference type="SMR" id="Q971B8"/>
<dbReference type="STRING" id="273063.STK_14350"/>
<dbReference type="KEGG" id="sto:STK_14350"/>
<dbReference type="PATRIC" id="fig|273063.9.peg.1635"/>
<dbReference type="eggNOG" id="arCOG00869">
    <property type="taxonomic scope" value="Archaea"/>
</dbReference>
<dbReference type="OrthoDB" id="43245at2157"/>
<dbReference type="Proteomes" id="UP000001015">
    <property type="component" value="Chromosome"/>
</dbReference>
<dbReference type="GO" id="GO:0005886">
    <property type="term" value="C:plasma membrane"/>
    <property type="evidence" value="ECO:0007669"/>
    <property type="project" value="UniProtKB-SubCell"/>
</dbReference>
<dbReference type="GO" id="GO:0033178">
    <property type="term" value="C:proton-transporting two-sector ATPase complex, catalytic domain"/>
    <property type="evidence" value="ECO:0007669"/>
    <property type="project" value="InterPro"/>
</dbReference>
<dbReference type="GO" id="GO:0005524">
    <property type="term" value="F:ATP binding"/>
    <property type="evidence" value="ECO:0007669"/>
    <property type="project" value="UniProtKB-UniRule"/>
</dbReference>
<dbReference type="GO" id="GO:0046933">
    <property type="term" value="F:proton-transporting ATP synthase activity, rotational mechanism"/>
    <property type="evidence" value="ECO:0007669"/>
    <property type="project" value="UniProtKB-UniRule"/>
</dbReference>
<dbReference type="GO" id="GO:0046961">
    <property type="term" value="F:proton-transporting ATPase activity, rotational mechanism"/>
    <property type="evidence" value="ECO:0007669"/>
    <property type="project" value="InterPro"/>
</dbReference>
<dbReference type="GO" id="GO:0042777">
    <property type="term" value="P:proton motive force-driven plasma membrane ATP synthesis"/>
    <property type="evidence" value="ECO:0007669"/>
    <property type="project" value="UniProtKB-UniRule"/>
</dbReference>
<dbReference type="Gene3D" id="3.30.2320.30">
    <property type="entry name" value="ATP synthase, E subunit, C-terminal"/>
    <property type="match status" value="1"/>
</dbReference>
<dbReference type="HAMAP" id="MF_00311">
    <property type="entry name" value="ATP_synth_E_arch"/>
    <property type="match status" value="1"/>
</dbReference>
<dbReference type="InterPro" id="IPR038495">
    <property type="entry name" value="ATPase_E_C"/>
</dbReference>
<dbReference type="InterPro" id="IPR002842">
    <property type="entry name" value="ATPase_V1_Esu"/>
</dbReference>
<dbReference type="Pfam" id="PF01991">
    <property type="entry name" value="vATP-synt_E"/>
    <property type="match status" value="1"/>
</dbReference>
<dbReference type="SUPFAM" id="SSF160527">
    <property type="entry name" value="V-type ATPase subunit E-like"/>
    <property type="match status" value="1"/>
</dbReference>
<name>AATE_SULTO</name>
<keyword id="KW-0066">ATP synthesis</keyword>
<keyword id="KW-1003">Cell membrane</keyword>
<keyword id="KW-0375">Hydrogen ion transport</keyword>
<keyword id="KW-0406">Ion transport</keyword>
<keyword id="KW-0472">Membrane</keyword>
<keyword id="KW-1185">Reference proteome</keyword>
<keyword id="KW-0813">Transport</keyword>
<sequence>MVSFEDLLNYSLNEEKNKITEEFKKILSEMNQIIDEAYAEVYREYSAKITDLVNKNNDRIRGEIAKMEIENKRLISKEMDYWIENVKENAKKSLYEFVKTDNYKKGLESIISREVSDGSIIYCSPSDQKSISDIIKKKKISCKIVVDEKIVGGIKIYYPDKSLSKDFTLETILNQVFDDIRDKIAQILFGE</sequence>
<evidence type="ECO:0000255" key="1">
    <source>
        <dbReference type="HAMAP-Rule" id="MF_00311"/>
    </source>
</evidence>
<evidence type="ECO:0000305" key="2"/>
<evidence type="ECO:0000305" key="3">
    <source>
    </source>
</evidence>
<reference key="1">
    <citation type="journal article" date="1990" name="J. Biol. Chem.">
        <title>Structure of an ATPase operon of an acidothermophilic archaebacterium, Sulfolobus acidocaldarius.</title>
        <authorList>
            <person name="Denda K."/>
            <person name="Konishi J."/>
            <person name="Hajiro K."/>
            <person name="Oshima T."/>
            <person name="Date T."/>
            <person name="Yoshida M."/>
        </authorList>
    </citation>
    <scope>NUCLEOTIDE SEQUENCE [GENOMIC DNA]</scope>
</reference>
<reference key="2">
    <citation type="journal article" date="2001" name="DNA Res.">
        <title>Complete genome sequence of an aerobic thermoacidophilic Crenarchaeon, Sulfolobus tokodaii strain7.</title>
        <authorList>
            <person name="Kawarabayasi Y."/>
            <person name="Hino Y."/>
            <person name="Horikawa H."/>
            <person name="Jin-no K."/>
            <person name="Takahashi M."/>
            <person name="Sekine M."/>
            <person name="Baba S."/>
            <person name="Ankai A."/>
            <person name="Kosugi H."/>
            <person name="Hosoyama A."/>
            <person name="Fukui S."/>
            <person name="Nagai Y."/>
            <person name="Nishijima K."/>
            <person name="Otsuka R."/>
            <person name="Nakazawa H."/>
            <person name="Takamiya M."/>
            <person name="Kato Y."/>
            <person name="Yoshizawa T."/>
            <person name="Tanaka T."/>
            <person name="Kudoh Y."/>
            <person name="Yamazaki J."/>
            <person name="Kushida N."/>
            <person name="Oguchi A."/>
            <person name="Aoki K."/>
            <person name="Masuda S."/>
            <person name="Yanagii M."/>
            <person name="Nishimura M."/>
            <person name="Yamagishi A."/>
            <person name="Oshima T."/>
            <person name="Kikuchi H."/>
        </authorList>
    </citation>
    <scope>NUCLEOTIDE SEQUENCE [LARGE SCALE GENOMIC DNA]</scope>
    <source>
        <strain>DSM 16993 / JCM 10545 / NBRC 100140 / 7</strain>
    </source>
</reference>
<gene>
    <name evidence="1" type="primary">atpE</name>
    <name type="synonym">atpD</name>
    <name type="ordered locus">STK_14350</name>
</gene>
<organism>
    <name type="scientific">Sulfurisphaera tokodaii (strain DSM 16993 / JCM 10545 / NBRC 100140 / 7)</name>
    <name type="common">Sulfolobus tokodaii</name>
    <dbReference type="NCBI Taxonomy" id="273063"/>
    <lineage>
        <taxon>Archaea</taxon>
        <taxon>Thermoproteota</taxon>
        <taxon>Thermoprotei</taxon>
        <taxon>Sulfolobales</taxon>
        <taxon>Sulfolobaceae</taxon>
        <taxon>Sulfurisphaera</taxon>
    </lineage>
</organism>
<accession>Q971B8</accession>
<accession>F9VNC5</accession>
<accession>P22722</accession>
<proteinExistence type="inferred from homology"/>